<evidence type="ECO:0000250" key="1"/>
<evidence type="ECO:0000255" key="2"/>
<evidence type="ECO:0000305" key="3"/>
<accession>Q82L56</accession>
<proteinExistence type="inferred from homology"/>
<reference key="1">
    <citation type="journal article" date="2001" name="Proc. Natl. Acad. Sci. U.S.A.">
        <title>Genome sequence of an industrial microorganism Streptomyces avermitilis: deducing the ability of producing secondary metabolites.</title>
        <authorList>
            <person name="Omura S."/>
            <person name="Ikeda H."/>
            <person name="Ishikawa J."/>
            <person name="Hanamoto A."/>
            <person name="Takahashi C."/>
            <person name="Shinose M."/>
            <person name="Takahashi Y."/>
            <person name="Horikawa H."/>
            <person name="Nakazawa H."/>
            <person name="Osonoe T."/>
            <person name="Kikuchi H."/>
            <person name="Shiba T."/>
            <person name="Sakaki Y."/>
            <person name="Hattori M."/>
        </authorList>
    </citation>
    <scope>NUCLEOTIDE SEQUENCE [LARGE SCALE GENOMIC DNA]</scope>
    <source>
        <strain>ATCC 31267 / DSM 46492 / JCM 5070 / NBRC 14893 / NCIMB 12804 / NRRL 8165 / MA-4680</strain>
    </source>
</reference>
<reference key="2">
    <citation type="journal article" date="2003" name="Nat. Biotechnol.">
        <title>Complete genome sequence and comparative analysis of the industrial microorganism Streptomyces avermitilis.</title>
        <authorList>
            <person name="Ikeda H."/>
            <person name="Ishikawa J."/>
            <person name="Hanamoto A."/>
            <person name="Shinose M."/>
            <person name="Kikuchi H."/>
            <person name="Shiba T."/>
            <person name="Sakaki Y."/>
            <person name="Hattori M."/>
            <person name="Omura S."/>
        </authorList>
    </citation>
    <scope>NUCLEOTIDE SEQUENCE [LARGE SCALE GENOMIC DNA]</scope>
    <source>
        <strain>ATCC 31267 / DSM 46492 / JCM 5070 / NBRC 14893 / NCIMB 12804 / NRRL 8165 / MA-4680</strain>
    </source>
</reference>
<name>SSIX_STRAW</name>
<organism>
    <name type="scientific">Streptomyces avermitilis (strain ATCC 31267 / DSM 46492 / JCM 5070 / NBRC 14893 / NCIMB 12804 / NRRL 8165 / MA-4680)</name>
    <dbReference type="NCBI Taxonomy" id="227882"/>
    <lineage>
        <taxon>Bacteria</taxon>
        <taxon>Bacillati</taxon>
        <taxon>Actinomycetota</taxon>
        <taxon>Actinomycetes</taxon>
        <taxon>Kitasatosporales</taxon>
        <taxon>Streptomycetaceae</taxon>
        <taxon>Streptomyces</taxon>
    </lineage>
</organism>
<comment type="subcellular location">
    <subcellularLocation>
        <location evidence="1">Secreted</location>
    </subcellularLocation>
</comment>
<comment type="similarity">
    <text evidence="3">Belongs to the protease inhibitor I16 (SSI) family.</text>
</comment>
<dbReference type="EMBL" id="BA000030">
    <property type="protein sequence ID" value="BAC69867.1"/>
    <property type="molecule type" value="Genomic_DNA"/>
</dbReference>
<dbReference type="RefSeq" id="WP_010983596.1">
    <property type="nucleotide sequence ID" value="NZ_JZJK01000086.1"/>
</dbReference>
<dbReference type="SMR" id="Q82L56"/>
<dbReference type="GeneID" id="41539252"/>
<dbReference type="KEGG" id="sma:SAVERM_2156"/>
<dbReference type="eggNOG" id="ENOG50333FU">
    <property type="taxonomic scope" value="Bacteria"/>
</dbReference>
<dbReference type="HOGENOM" id="CLU_121949_0_0_11"/>
<dbReference type="OrthoDB" id="4567948at2"/>
<dbReference type="Proteomes" id="UP000000428">
    <property type="component" value="Chromosome"/>
</dbReference>
<dbReference type="GO" id="GO:0005576">
    <property type="term" value="C:extracellular region"/>
    <property type="evidence" value="ECO:0007669"/>
    <property type="project" value="UniProtKB-SubCell"/>
</dbReference>
<dbReference type="GO" id="GO:0004867">
    <property type="term" value="F:serine-type endopeptidase inhibitor activity"/>
    <property type="evidence" value="ECO:0007669"/>
    <property type="project" value="UniProtKB-KW"/>
</dbReference>
<dbReference type="Gene3D" id="3.30.350.10">
    <property type="entry name" value="Subtilisin inhibitor-like"/>
    <property type="match status" value="1"/>
</dbReference>
<dbReference type="InterPro" id="IPR020054">
    <property type="entry name" value="Prot_inh_SSI_I16_CS"/>
</dbReference>
<dbReference type="InterPro" id="IPR023549">
    <property type="entry name" value="Subtilisin_inhibitor"/>
</dbReference>
<dbReference type="InterPro" id="IPR036819">
    <property type="entry name" value="Subtilisin_inhibitor-like_sf"/>
</dbReference>
<dbReference type="Pfam" id="PF00720">
    <property type="entry name" value="SSI"/>
    <property type="match status" value="1"/>
</dbReference>
<dbReference type="SUPFAM" id="SSF55399">
    <property type="entry name" value="Subtilisin inhibitor"/>
    <property type="match status" value="1"/>
</dbReference>
<dbReference type="PROSITE" id="PS00999">
    <property type="entry name" value="SSI"/>
    <property type="match status" value="1"/>
</dbReference>
<keyword id="KW-1015">Disulfide bond</keyword>
<keyword id="KW-0646">Protease inhibitor</keyword>
<keyword id="KW-1185">Reference proteome</keyword>
<keyword id="KW-0964">Secreted</keyword>
<keyword id="KW-0722">Serine protease inhibitor</keyword>
<keyword id="KW-0732">Signal</keyword>
<gene>
    <name type="ordered locus">SAV_2156</name>
</gene>
<sequence length="146" mass="15237">MTKTTMAVPGALLAAIALLSAAPAQAAAHRVTPGNWLYVTVTTGDARSSHISRLLTCDPPHGHAHAARACEELAAADGDITRIPPKRTFCPMIYAPVTADAHGEWNGRHVEYRHAFGNACGLEGETGAVFALSEQASDGPTPGLRS</sequence>
<protein>
    <recommendedName>
        <fullName>Putative serine protease inhibitor SAV_2156</fullName>
    </recommendedName>
</protein>
<feature type="signal peptide" evidence="2">
    <location>
        <begin position="1"/>
        <end position="26"/>
    </location>
</feature>
<feature type="chain" id="PRO_0000033279" description="Putative serine protease inhibitor SAV_2156">
    <location>
        <begin position="27"/>
        <end position="146"/>
    </location>
</feature>
<feature type="disulfide bond" evidence="1">
    <location>
        <begin position="57"/>
        <end position="70"/>
    </location>
</feature>
<feature type="disulfide bond" evidence="1">
    <location>
        <begin position="90"/>
        <end position="120"/>
    </location>
</feature>